<gene>
    <name type="ordered locus">YML099W-A</name>
    <name type="ORF">YML100W-A</name>
</gene>
<proteinExistence type="uncertain"/>
<keyword id="KW-0472">Membrane</keyword>
<keyword id="KW-0812">Transmembrane</keyword>
<keyword id="KW-1133">Transmembrane helix</keyword>
<name>YM099_YEAST</name>
<dbReference type="EMBL" id="Z46660">
    <property type="status" value="NOT_ANNOTATED_CDS"/>
    <property type="molecule type" value="Genomic_DNA"/>
</dbReference>
<dbReference type="EMBL" id="AY692741">
    <property type="protein sequence ID" value="AAT92760.1"/>
    <property type="molecule type" value="Genomic_DNA"/>
</dbReference>
<dbReference type="PaxDb" id="4932-YML099W-A"/>
<dbReference type="EnsemblFungi" id="YML099W-A_mRNA">
    <property type="protein sequence ID" value="YML099W-A"/>
    <property type="gene ID" value="YML099W-A"/>
</dbReference>
<dbReference type="AGR" id="SGD:S000004567"/>
<dbReference type="SGD" id="S000004567">
    <property type="gene designation" value="YML099W-A"/>
</dbReference>
<dbReference type="HOGENOM" id="CLU_2186033_0_0_1"/>
<dbReference type="OrthoDB" id="10294346at2759"/>
<dbReference type="GO" id="GO:0016020">
    <property type="term" value="C:membrane"/>
    <property type="evidence" value="ECO:0007669"/>
    <property type="project" value="UniProtKB-SubCell"/>
</dbReference>
<evidence type="ECO:0000255" key="1"/>
<evidence type="ECO:0000305" key="2"/>
<evidence type="ECO:0000305" key="3">
    <source>
    </source>
</evidence>
<protein>
    <recommendedName>
        <fullName>Putative uncharacterized protein YML099W-A</fullName>
    </recommendedName>
</protein>
<comment type="subcellular location">
    <subcellularLocation>
        <location evidence="2">Membrane</location>
        <topology evidence="2">Single-pass membrane protein</topology>
    </subcellularLocation>
</comment>
<comment type="miscellaneous">
    <text evidence="2">Partially overlaps ARG81.</text>
</comment>
<comment type="caution">
    <text evidence="3">Product of a dubious gene prediction unlikely to encode a functional protein. Because of that it is not part of the S.cerevisiae S288c complete/reference proteome set.</text>
</comment>
<feature type="chain" id="PRO_0000299662" description="Putative uncharacterized protein YML099W-A">
    <location>
        <begin position="1"/>
        <end position="109"/>
    </location>
</feature>
<feature type="transmembrane region" description="Helical" evidence="1">
    <location>
        <begin position="12"/>
        <end position="32"/>
    </location>
</feature>
<reference key="1">
    <citation type="journal article" date="1997" name="Nature">
        <title>The nucleotide sequence of Saccharomyces cerevisiae chromosome XIII.</title>
        <authorList>
            <person name="Bowman S."/>
            <person name="Churcher C.M."/>
            <person name="Badcock K."/>
            <person name="Brown D."/>
            <person name="Chillingworth T."/>
            <person name="Connor R."/>
            <person name="Dedman K."/>
            <person name="Devlin K."/>
            <person name="Gentles S."/>
            <person name="Hamlin N."/>
            <person name="Hunt S."/>
            <person name="Jagels K."/>
            <person name="Lye G."/>
            <person name="Moule S."/>
            <person name="Odell C."/>
            <person name="Pearson D."/>
            <person name="Rajandream M.A."/>
            <person name="Rice P."/>
            <person name="Skelton J."/>
            <person name="Walsh S.V."/>
            <person name="Whitehead S."/>
            <person name="Barrell B.G."/>
        </authorList>
    </citation>
    <scope>NUCLEOTIDE SEQUENCE [LARGE SCALE GENOMIC DNA]</scope>
    <source>
        <strain>ATCC 204508 / S288c</strain>
    </source>
</reference>
<reference key="2">
    <citation type="journal article" date="2014" name="G3 (Bethesda)">
        <title>The reference genome sequence of Saccharomyces cerevisiae: Then and now.</title>
        <authorList>
            <person name="Engel S.R."/>
            <person name="Dietrich F.S."/>
            <person name="Fisk D.G."/>
            <person name="Binkley G."/>
            <person name="Balakrishnan R."/>
            <person name="Costanzo M.C."/>
            <person name="Dwight S.S."/>
            <person name="Hitz B.C."/>
            <person name="Karra K."/>
            <person name="Nash R.S."/>
            <person name="Weng S."/>
            <person name="Wong E.D."/>
            <person name="Lloyd P."/>
            <person name="Skrzypek M.S."/>
            <person name="Miyasato S.R."/>
            <person name="Simison M."/>
            <person name="Cherry J.M."/>
        </authorList>
    </citation>
    <scope>GENOME REANNOTATION</scope>
    <source>
        <strain>ATCC 204508 / S288c</strain>
    </source>
</reference>
<reference key="3">
    <citation type="journal article" date="2007" name="Genome Res.">
        <title>Approaching a complete repository of sequence-verified protein-encoding clones for Saccharomyces cerevisiae.</title>
        <authorList>
            <person name="Hu Y."/>
            <person name="Rolfs A."/>
            <person name="Bhullar B."/>
            <person name="Murthy T.V.S."/>
            <person name="Zhu C."/>
            <person name="Berger M.F."/>
            <person name="Camargo A.A."/>
            <person name="Kelley F."/>
            <person name="McCarron S."/>
            <person name="Jepson D."/>
            <person name="Richardson A."/>
            <person name="Raphael J."/>
            <person name="Moreira D."/>
            <person name="Taycher E."/>
            <person name="Zuo D."/>
            <person name="Mohr S."/>
            <person name="Kane M.F."/>
            <person name="Williamson J."/>
            <person name="Simpson A.J.G."/>
            <person name="Bulyk M.L."/>
            <person name="Harlow E."/>
            <person name="Marsischky G."/>
            <person name="Kolodner R.D."/>
            <person name="LaBaer J."/>
        </authorList>
    </citation>
    <scope>NUCLEOTIDE SEQUENCE [GENOMIC DNA]</scope>
    <source>
        <strain>ATCC 204508 / S288c</strain>
    </source>
</reference>
<accession>Q6B2I9</accession>
<organism>
    <name type="scientific">Saccharomyces cerevisiae (strain ATCC 204508 / S288c)</name>
    <name type="common">Baker's yeast</name>
    <dbReference type="NCBI Taxonomy" id="559292"/>
    <lineage>
        <taxon>Eukaryota</taxon>
        <taxon>Fungi</taxon>
        <taxon>Dikarya</taxon>
        <taxon>Ascomycota</taxon>
        <taxon>Saccharomycotina</taxon>
        <taxon>Saccharomycetes</taxon>
        <taxon>Saccharomycetales</taxon>
        <taxon>Saccharomycetaceae</taxon>
        <taxon>Saccharomyces</taxon>
    </lineage>
</organism>
<sequence length="109" mass="12629">MNSENSKITFKPNILIKGVYIFVLYGMCICIVKNYFKTQLFQLLAPAIHEKSKNNIFMIASDSFPNLYKQNTNYRPAHPLSVASKLPTLLAWLPNRSPLHFQLIWLPIF</sequence>